<sequence length="259" mass="30068">MHKLKSAQKDKVRQFMACTQASERTAIYCLTQNEWKLDEATDSFFQNPEAFHRESMKSSVDQKKLEQLYSRYKDPQDENKIGIDGIQQFCDDLSLDPASISVLVIAWKFRAATQCEFSKKEFVDGMTELGCDSTERLKALLPRLEQELKDPAKFKDLYQFTFTFAKNPGQKGLDLEMAVAYWKLVLSGRFKFLDLWNTFLLEHHKRSIPRDTWNLLLDFGNMIADDLSNYDEEGAWPVLIDDFVEYARPVVTGGRRSPF</sequence>
<gene>
    <name evidence="8" type="primary">Dcun1d2</name>
    <name type="synonym">Dcun1l2</name>
    <name evidence="6" type="synonym">SCCRO2</name>
</gene>
<reference key="1">
    <citation type="journal article" date="2005" name="Science">
        <title>The transcriptional landscape of the mammalian genome.</title>
        <authorList>
            <person name="Carninci P."/>
            <person name="Kasukawa T."/>
            <person name="Katayama S."/>
            <person name="Gough J."/>
            <person name="Frith M.C."/>
            <person name="Maeda N."/>
            <person name="Oyama R."/>
            <person name="Ravasi T."/>
            <person name="Lenhard B."/>
            <person name="Wells C."/>
            <person name="Kodzius R."/>
            <person name="Shimokawa K."/>
            <person name="Bajic V.B."/>
            <person name="Brenner S.E."/>
            <person name="Batalov S."/>
            <person name="Forrest A.R."/>
            <person name="Zavolan M."/>
            <person name="Davis M.J."/>
            <person name="Wilming L.G."/>
            <person name="Aidinis V."/>
            <person name="Allen J.E."/>
            <person name="Ambesi-Impiombato A."/>
            <person name="Apweiler R."/>
            <person name="Aturaliya R.N."/>
            <person name="Bailey T.L."/>
            <person name="Bansal M."/>
            <person name="Baxter L."/>
            <person name="Beisel K.W."/>
            <person name="Bersano T."/>
            <person name="Bono H."/>
            <person name="Chalk A.M."/>
            <person name="Chiu K.P."/>
            <person name="Choudhary V."/>
            <person name="Christoffels A."/>
            <person name="Clutterbuck D.R."/>
            <person name="Crowe M.L."/>
            <person name="Dalla E."/>
            <person name="Dalrymple B.P."/>
            <person name="de Bono B."/>
            <person name="Della Gatta G."/>
            <person name="di Bernardo D."/>
            <person name="Down T."/>
            <person name="Engstrom P."/>
            <person name="Fagiolini M."/>
            <person name="Faulkner G."/>
            <person name="Fletcher C.F."/>
            <person name="Fukushima T."/>
            <person name="Furuno M."/>
            <person name="Futaki S."/>
            <person name="Gariboldi M."/>
            <person name="Georgii-Hemming P."/>
            <person name="Gingeras T.R."/>
            <person name="Gojobori T."/>
            <person name="Green R.E."/>
            <person name="Gustincich S."/>
            <person name="Harbers M."/>
            <person name="Hayashi Y."/>
            <person name="Hensch T.K."/>
            <person name="Hirokawa N."/>
            <person name="Hill D."/>
            <person name="Huminiecki L."/>
            <person name="Iacono M."/>
            <person name="Ikeo K."/>
            <person name="Iwama A."/>
            <person name="Ishikawa T."/>
            <person name="Jakt M."/>
            <person name="Kanapin A."/>
            <person name="Katoh M."/>
            <person name="Kawasawa Y."/>
            <person name="Kelso J."/>
            <person name="Kitamura H."/>
            <person name="Kitano H."/>
            <person name="Kollias G."/>
            <person name="Krishnan S.P."/>
            <person name="Kruger A."/>
            <person name="Kummerfeld S.K."/>
            <person name="Kurochkin I.V."/>
            <person name="Lareau L.F."/>
            <person name="Lazarevic D."/>
            <person name="Lipovich L."/>
            <person name="Liu J."/>
            <person name="Liuni S."/>
            <person name="McWilliam S."/>
            <person name="Madan Babu M."/>
            <person name="Madera M."/>
            <person name="Marchionni L."/>
            <person name="Matsuda H."/>
            <person name="Matsuzawa S."/>
            <person name="Miki H."/>
            <person name="Mignone F."/>
            <person name="Miyake S."/>
            <person name="Morris K."/>
            <person name="Mottagui-Tabar S."/>
            <person name="Mulder N."/>
            <person name="Nakano N."/>
            <person name="Nakauchi H."/>
            <person name="Ng P."/>
            <person name="Nilsson R."/>
            <person name="Nishiguchi S."/>
            <person name="Nishikawa S."/>
            <person name="Nori F."/>
            <person name="Ohara O."/>
            <person name="Okazaki Y."/>
            <person name="Orlando V."/>
            <person name="Pang K.C."/>
            <person name="Pavan W.J."/>
            <person name="Pavesi G."/>
            <person name="Pesole G."/>
            <person name="Petrovsky N."/>
            <person name="Piazza S."/>
            <person name="Reed J."/>
            <person name="Reid J.F."/>
            <person name="Ring B.Z."/>
            <person name="Ringwald M."/>
            <person name="Rost B."/>
            <person name="Ruan Y."/>
            <person name="Salzberg S.L."/>
            <person name="Sandelin A."/>
            <person name="Schneider C."/>
            <person name="Schoenbach C."/>
            <person name="Sekiguchi K."/>
            <person name="Semple C.A."/>
            <person name="Seno S."/>
            <person name="Sessa L."/>
            <person name="Sheng Y."/>
            <person name="Shibata Y."/>
            <person name="Shimada H."/>
            <person name="Shimada K."/>
            <person name="Silva D."/>
            <person name="Sinclair B."/>
            <person name="Sperling S."/>
            <person name="Stupka E."/>
            <person name="Sugiura K."/>
            <person name="Sultana R."/>
            <person name="Takenaka Y."/>
            <person name="Taki K."/>
            <person name="Tammoja K."/>
            <person name="Tan S.L."/>
            <person name="Tang S."/>
            <person name="Taylor M.S."/>
            <person name="Tegner J."/>
            <person name="Teichmann S.A."/>
            <person name="Ueda H.R."/>
            <person name="van Nimwegen E."/>
            <person name="Verardo R."/>
            <person name="Wei C.L."/>
            <person name="Yagi K."/>
            <person name="Yamanishi H."/>
            <person name="Zabarovsky E."/>
            <person name="Zhu S."/>
            <person name="Zimmer A."/>
            <person name="Hide W."/>
            <person name="Bult C."/>
            <person name="Grimmond S.M."/>
            <person name="Teasdale R.D."/>
            <person name="Liu E.T."/>
            <person name="Brusic V."/>
            <person name="Quackenbush J."/>
            <person name="Wahlestedt C."/>
            <person name="Mattick J.S."/>
            <person name="Hume D.A."/>
            <person name="Kai C."/>
            <person name="Sasaki D."/>
            <person name="Tomaru Y."/>
            <person name="Fukuda S."/>
            <person name="Kanamori-Katayama M."/>
            <person name="Suzuki M."/>
            <person name="Aoki J."/>
            <person name="Arakawa T."/>
            <person name="Iida J."/>
            <person name="Imamura K."/>
            <person name="Itoh M."/>
            <person name="Kato T."/>
            <person name="Kawaji H."/>
            <person name="Kawagashira N."/>
            <person name="Kawashima T."/>
            <person name="Kojima M."/>
            <person name="Kondo S."/>
            <person name="Konno H."/>
            <person name="Nakano K."/>
            <person name="Ninomiya N."/>
            <person name="Nishio T."/>
            <person name="Okada M."/>
            <person name="Plessy C."/>
            <person name="Shibata K."/>
            <person name="Shiraki T."/>
            <person name="Suzuki S."/>
            <person name="Tagami M."/>
            <person name="Waki K."/>
            <person name="Watahiki A."/>
            <person name="Okamura-Oho Y."/>
            <person name="Suzuki H."/>
            <person name="Kawai J."/>
            <person name="Hayashizaki Y."/>
        </authorList>
    </citation>
    <scope>NUCLEOTIDE SEQUENCE [LARGE SCALE MRNA] (ISOFORMS 1 AND 2)</scope>
    <source>
        <strain>C57BL/6J</strain>
        <tissue>Dendritic cell</tissue>
        <tissue>Diencephalon</tissue>
    </source>
</reference>
<reference key="2">
    <citation type="journal article" date="2009" name="PLoS Biol.">
        <title>Lineage-specific biology revealed by a finished genome assembly of the mouse.</title>
        <authorList>
            <person name="Church D.M."/>
            <person name="Goodstadt L."/>
            <person name="Hillier L.W."/>
            <person name="Zody M.C."/>
            <person name="Goldstein S."/>
            <person name="She X."/>
            <person name="Bult C.J."/>
            <person name="Agarwala R."/>
            <person name="Cherry J.L."/>
            <person name="DiCuccio M."/>
            <person name="Hlavina W."/>
            <person name="Kapustin Y."/>
            <person name="Meric P."/>
            <person name="Maglott D."/>
            <person name="Birtle Z."/>
            <person name="Marques A.C."/>
            <person name="Graves T."/>
            <person name="Zhou S."/>
            <person name="Teague B."/>
            <person name="Potamousis K."/>
            <person name="Churas C."/>
            <person name="Place M."/>
            <person name="Herschleb J."/>
            <person name="Runnheim R."/>
            <person name="Forrest D."/>
            <person name="Amos-Landgraf J."/>
            <person name="Schwartz D.C."/>
            <person name="Cheng Z."/>
            <person name="Lindblad-Toh K."/>
            <person name="Eichler E.E."/>
            <person name="Ponting C.P."/>
        </authorList>
    </citation>
    <scope>NUCLEOTIDE SEQUENCE [LARGE SCALE GENOMIC DNA]</scope>
    <source>
        <strain>C57BL/6J</strain>
    </source>
</reference>
<reference key="3">
    <citation type="journal article" date="2004" name="Genome Res.">
        <title>The status, quality, and expansion of the NIH full-length cDNA project: the Mammalian Gene Collection (MGC).</title>
        <authorList>
            <consortium name="The MGC Project Team"/>
        </authorList>
    </citation>
    <scope>NUCLEOTIDE SEQUENCE [LARGE SCALE MRNA] (ISOFORM 3)</scope>
    <source>
        <strain>C3H/He</strain>
        <tissue>Mesenchymal stem cell</tissue>
    </source>
</reference>
<reference key="4">
    <citation type="journal article" date="2010" name="Cell">
        <title>A tissue-specific atlas of mouse protein phosphorylation and expression.</title>
        <authorList>
            <person name="Huttlin E.L."/>
            <person name="Jedrychowski M.P."/>
            <person name="Elias J.E."/>
            <person name="Goswami T."/>
            <person name="Rad R."/>
            <person name="Beausoleil S.A."/>
            <person name="Villen J."/>
            <person name="Haas W."/>
            <person name="Sowa M.E."/>
            <person name="Gygi S.P."/>
        </authorList>
    </citation>
    <scope>PHOSPHORYLATION [LARGE SCALE ANALYSIS] AT SER-55</scope>
    <scope>IDENTIFICATION BY MASS SPECTROMETRY [LARGE SCALE ANALYSIS]</scope>
    <source>
        <tissue>Brain</tissue>
        <tissue>Brown adipose tissue</tissue>
        <tissue>Heart</tissue>
        <tissue>Kidney</tissue>
        <tissue>Lung</tissue>
        <tissue>Testis</tissue>
    </source>
</reference>
<reference key="5">
    <citation type="journal article" date="2016" name="J. Biol. Chem.">
        <title>Squamous Cell Carcinoma-related Oncogene (SCCRO) Family Members Regulate Cell Growth and Proliferation through Their Cooperative and Antagonistic Effects on Cullin Neddylation.</title>
        <authorList>
            <person name="Fu W."/>
            <person name="Sun J."/>
            <person name="Huang G."/>
            <person name="Liu J.C."/>
            <person name="Kaufman A."/>
            <person name="Ryan R.J."/>
            <person name="Ramanathan S.Y."/>
            <person name="Venkatesh T."/>
            <person name="Singh B."/>
        </authorList>
    </citation>
    <scope>FUNCTION</scope>
    <scope>TISSUE SPECIFICITY</scope>
</reference>
<keyword id="KW-0025">Alternative splicing</keyword>
<keyword id="KW-0963">Cytoplasm</keyword>
<keyword id="KW-0539">Nucleus</keyword>
<keyword id="KW-0597">Phosphoprotein</keyword>
<keyword id="KW-1185">Reference proteome</keyword>
<keyword id="KW-0833">Ubl conjugation pathway</keyword>
<feature type="chain" id="PRO_0000129502" description="DCN1-like protein 2">
    <location>
        <begin position="1"/>
        <end position="259"/>
    </location>
</feature>
<feature type="domain" description="UBA-like">
    <location>
        <begin position="8"/>
        <end position="45"/>
    </location>
</feature>
<feature type="domain" description="DCUN1" evidence="2">
    <location>
        <begin position="60"/>
        <end position="248"/>
    </location>
</feature>
<feature type="modified residue" description="Phosphoserine" evidence="9">
    <location>
        <position position="55"/>
    </location>
</feature>
<feature type="splice variant" id="VSP_027370" description="In isoform 3." evidence="4">
    <location>
        <begin position="174"/>
        <end position="233"/>
    </location>
</feature>
<feature type="splice variant" id="VSP_015318" description="In isoform 2." evidence="5">
    <original>EHHKRSIPRDTWNLLLDFGNMIADDLSNYDEEGAWPVLIDDFVEYARPVVTGGRRSPF</original>
    <variation>LVSDCFLPFVPNQKEAFLV</variation>
    <location>
        <begin position="202"/>
        <end position="259"/>
    </location>
</feature>
<proteinExistence type="evidence at protein level"/>
<evidence type="ECO:0000250" key="1">
    <source>
        <dbReference type="UniProtKB" id="Q6PH85"/>
    </source>
</evidence>
<evidence type="ECO:0000255" key="2">
    <source>
        <dbReference type="PROSITE-ProRule" id="PRU00574"/>
    </source>
</evidence>
<evidence type="ECO:0000269" key="3">
    <source>
    </source>
</evidence>
<evidence type="ECO:0000303" key="4">
    <source>
    </source>
</evidence>
<evidence type="ECO:0000303" key="5">
    <source>
    </source>
</evidence>
<evidence type="ECO:0000303" key="6">
    <source>
    </source>
</evidence>
<evidence type="ECO:0000305" key="7"/>
<evidence type="ECO:0000312" key="8">
    <source>
        <dbReference type="MGI" id="MGI:2142792"/>
    </source>
</evidence>
<evidence type="ECO:0007744" key="9">
    <source>
    </source>
</evidence>
<organism>
    <name type="scientific">Mus musculus</name>
    <name type="common">Mouse</name>
    <dbReference type="NCBI Taxonomy" id="10090"/>
    <lineage>
        <taxon>Eukaryota</taxon>
        <taxon>Metazoa</taxon>
        <taxon>Chordata</taxon>
        <taxon>Craniata</taxon>
        <taxon>Vertebrata</taxon>
        <taxon>Euteleostomi</taxon>
        <taxon>Mammalia</taxon>
        <taxon>Eutheria</taxon>
        <taxon>Euarchontoglires</taxon>
        <taxon>Glires</taxon>
        <taxon>Rodentia</taxon>
        <taxon>Myomorpha</taxon>
        <taxon>Muroidea</taxon>
        <taxon>Muridae</taxon>
        <taxon>Murinae</taxon>
        <taxon>Mus</taxon>
        <taxon>Mus</taxon>
    </lineage>
</organism>
<comment type="function">
    <text evidence="3">Contributes to the neddylation of all cullins by transferring NEDD8 from N-terminally acetylated NEDD8-conjugating E2s enzyme to different cullin C-terminal domain-RBX complexes and plays an essential role in the regulation of SCF (SKP1-CUL1-F-box protein)-type complexes activity.</text>
</comment>
<comment type="subunit">
    <text evidence="1">Interacts (via the DCUN1 domain) with the unneddylated cullins: interacts with CUL1, CUL2, CUL3, CUL4A, CUL4B and CUL5; these interactions promote the cullin neddylation and the identity of the cullin dictates the affinity of the interaction. May also interact with regulators or subunits of cullin-RING ligases such as RBX1, RNF7, ELOB and DDB1; these interactions are bridged by cullins. Interacts with CAND1; this interaction is bridged by cullins such as CUL3 and strongly inhibits the neddylation of CUL3. These CAND-cullin-DCNL complexes can only be neddylated in the presence of a substrate adapter. Interacts (via DCUN1 domain) with the N-terminally acetylated form of UBE2M and UBE2F.</text>
</comment>
<comment type="subcellular location">
    <subcellularLocation>
        <location evidence="1">Cytoplasm</location>
    </subcellularLocation>
    <subcellularLocation>
        <location evidence="1">Nucleus</location>
    </subcellularLocation>
</comment>
<comment type="alternative products">
    <event type="alternative splicing"/>
    <isoform>
        <id>Q8BZJ7-1</id>
        <name>1</name>
        <sequence type="displayed"/>
    </isoform>
    <isoform>
        <id>Q8BZJ7-2</id>
        <name>2</name>
        <sequence type="described" ref="VSP_015318"/>
    </isoform>
    <isoform>
        <id>Q8BZJ7-4</id>
        <name>3</name>
        <sequence type="described" ref="VSP_027370"/>
    </isoform>
</comment>
<comment type="tissue specificity">
    <text evidence="3">Highest levels of expression are in the skeletal muscle with relatively lower levels of expression in the heart and brain (PubMed:26792857). Very low levels of expression in the kidney, liver, spleen, lung, ovary and testis (PubMed:26792857).</text>
</comment>
<comment type="domain">
    <text evidence="1">The DCUN1 domain, also known as PONY domain, mediates the interaction with different cullins. The DCUN1 domain mediates the interaction with the N-terminally acetylated NEDD8-conjugating E2s enzyme leading to the NEDD8 transfer from N-terminally acetylated NEDD8-conjugating E2s enzyme to different cullin C-terminal domain-RBX complexes; the neddylation efficiency correlates with the DCUN1D5-cullin and DCUN1D5-E2 interaction affinities.</text>
</comment>
<comment type="miscellaneous">
    <molecule>Isoform 2</molecule>
    <text evidence="7">Splicing donor and acceptor site not canonical.</text>
</comment>
<comment type="sequence caution" evidence="7">
    <conflict type="frameshift">
        <sequence resource="EMBL" id="BC052676"/>
    </conflict>
</comment>
<dbReference type="EMBL" id="AK034394">
    <property type="protein sequence ID" value="BAC28695.1"/>
    <property type="molecule type" value="mRNA"/>
</dbReference>
<dbReference type="EMBL" id="AK155726">
    <property type="protein sequence ID" value="BAE33403.1"/>
    <property type="molecule type" value="mRNA"/>
</dbReference>
<dbReference type="EMBL" id="AC130818">
    <property type="status" value="NOT_ANNOTATED_CDS"/>
    <property type="molecule type" value="Genomic_DNA"/>
</dbReference>
<dbReference type="EMBL" id="BC052676">
    <property type="status" value="NOT_ANNOTATED_CDS"/>
    <property type="molecule type" value="mRNA"/>
</dbReference>
<dbReference type="CCDS" id="CCDS40227.1">
    <molecule id="Q8BZJ7-4"/>
</dbReference>
<dbReference type="CCDS" id="CCDS40228.1">
    <molecule id="Q8BZJ7-1"/>
</dbReference>
<dbReference type="RefSeq" id="NP_001019675.2">
    <molecule id="Q8BZJ7-1"/>
    <property type="nucleotide sequence ID" value="NM_001024504.3"/>
</dbReference>
<dbReference type="RefSeq" id="NP_001036114.1">
    <property type="nucleotide sequence ID" value="NM_001042649.1"/>
</dbReference>
<dbReference type="RefSeq" id="NP_001036115.1">
    <molecule id="Q8BZJ7-4"/>
    <property type="nucleotide sequence ID" value="NM_001042650.2"/>
</dbReference>
<dbReference type="RefSeq" id="NP_001036116.1">
    <property type="nucleotide sequence ID" value="NM_001042651.1"/>
</dbReference>
<dbReference type="SMR" id="Q8BZJ7"/>
<dbReference type="BioGRID" id="221842">
    <property type="interactions" value="1"/>
</dbReference>
<dbReference type="FunCoup" id="Q8BZJ7">
    <property type="interactions" value="1946"/>
</dbReference>
<dbReference type="STRING" id="10090.ENSMUSP00000047208"/>
<dbReference type="iPTMnet" id="Q8BZJ7"/>
<dbReference type="PhosphoSitePlus" id="Q8BZJ7"/>
<dbReference type="jPOST" id="Q8BZJ7"/>
<dbReference type="PaxDb" id="10090-ENSMUSP00000047208"/>
<dbReference type="PeptideAtlas" id="Q8BZJ7"/>
<dbReference type="ProteomicsDB" id="279503">
    <molecule id="Q8BZJ7-1"/>
</dbReference>
<dbReference type="ProteomicsDB" id="279504">
    <molecule id="Q8BZJ7-2"/>
</dbReference>
<dbReference type="ProteomicsDB" id="279505">
    <molecule id="Q8BZJ7-4"/>
</dbReference>
<dbReference type="Pumba" id="Q8BZJ7"/>
<dbReference type="Antibodypedia" id="48901">
    <property type="antibodies" value="91 antibodies from 15 providers"/>
</dbReference>
<dbReference type="DNASU" id="102323"/>
<dbReference type="Ensembl" id="ENSMUST00000045366.10">
    <molecule id="Q8BZJ7-1"/>
    <property type="protein sequence ID" value="ENSMUSP00000047208.8"/>
    <property type="gene ID" value="ENSMUSG00000038506.14"/>
</dbReference>
<dbReference type="Ensembl" id="ENSMUST00000110840.8">
    <molecule id="Q8BZJ7-4"/>
    <property type="protein sequence ID" value="ENSMUSP00000106464.2"/>
    <property type="gene ID" value="ENSMUSG00000038506.14"/>
</dbReference>
<dbReference type="GeneID" id="102323"/>
<dbReference type="KEGG" id="mmu:102323"/>
<dbReference type="UCSC" id="uc009kxg.1">
    <molecule id="Q8BZJ7-1"/>
    <property type="organism name" value="mouse"/>
</dbReference>
<dbReference type="UCSC" id="uc009kxj.1">
    <molecule id="Q8BZJ7-4"/>
    <property type="organism name" value="mouse"/>
</dbReference>
<dbReference type="AGR" id="MGI:2142792"/>
<dbReference type="CTD" id="55208"/>
<dbReference type="MGI" id="MGI:2142792">
    <property type="gene designation" value="Dcun1d2"/>
</dbReference>
<dbReference type="VEuPathDB" id="HostDB:ENSMUSG00000038506"/>
<dbReference type="eggNOG" id="KOG3077">
    <property type="taxonomic scope" value="Eukaryota"/>
</dbReference>
<dbReference type="GeneTree" id="ENSGT00940000157453"/>
<dbReference type="HOGENOM" id="CLU_047042_0_1_1"/>
<dbReference type="InParanoid" id="Q8BZJ7"/>
<dbReference type="OMA" id="LWCKFLQ"/>
<dbReference type="OrthoDB" id="286637at2759"/>
<dbReference type="PhylomeDB" id="Q8BZJ7"/>
<dbReference type="TreeFam" id="TF313332"/>
<dbReference type="Reactome" id="R-MMU-8951664">
    <property type="pathway name" value="Neddylation"/>
</dbReference>
<dbReference type="BioGRID-ORCS" id="102323">
    <property type="hits" value="0 hits in 77 CRISPR screens"/>
</dbReference>
<dbReference type="ChiTaRS" id="Dcun1d2">
    <property type="organism name" value="mouse"/>
</dbReference>
<dbReference type="PRO" id="PR:Q8BZJ7"/>
<dbReference type="Proteomes" id="UP000000589">
    <property type="component" value="Chromosome 8"/>
</dbReference>
<dbReference type="RNAct" id="Q8BZJ7">
    <property type="molecule type" value="protein"/>
</dbReference>
<dbReference type="Bgee" id="ENSMUSG00000038506">
    <property type="expression patterns" value="Expressed in knee joint and 222 other cell types or tissues"/>
</dbReference>
<dbReference type="ExpressionAtlas" id="Q8BZJ7">
    <property type="expression patterns" value="baseline and differential"/>
</dbReference>
<dbReference type="GO" id="GO:0005737">
    <property type="term" value="C:cytoplasm"/>
    <property type="evidence" value="ECO:0000250"/>
    <property type="project" value="UniProtKB"/>
</dbReference>
<dbReference type="GO" id="GO:0005634">
    <property type="term" value="C:nucleus"/>
    <property type="evidence" value="ECO:0000250"/>
    <property type="project" value="UniProtKB"/>
</dbReference>
<dbReference type="GO" id="GO:0097602">
    <property type="term" value="F:cullin family protein binding"/>
    <property type="evidence" value="ECO:0000250"/>
    <property type="project" value="UniProtKB"/>
</dbReference>
<dbReference type="GO" id="GO:2000436">
    <property type="term" value="P:positive regulation of protein neddylation"/>
    <property type="evidence" value="ECO:0000250"/>
    <property type="project" value="UniProtKB"/>
</dbReference>
<dbReference type="GO" id="GO:2000434">
    <property type="term" value="P:regulation of protein neddylation"/>
    <property type="evidence" value="ECO:0000250"/>
    <property type="project" value="UniProtKB"/>
</dbReference>
<dbReference type="FunFam" id="1.10.238.10:FF:000030">
    <property type="entry name" value="DCN1-like protein"/>
    <property type="match status" value="1"/>
</dbReference>
<dbReference type="FunFam" id="1.10.238.200:FF:000001">
    <property type="entry name" value="DCN1-like protein"/>
    <property type="match status" value="1"/>
</dbReference>
<dbReference type="FunFam" id="1.10.8.10:FF:000021">
    <property type="entry name" value="DCN1-like protein"/>
    <property type="match status" value="1"/>
</dbReference>
<dbReference type="Gene3D" id="1.10.238.200">
    <property type="entry name" value="Cullin, PONY binding domain"/>
    <property type="match status" value="1"/>
</dbReference>
<dbReference type="Gene3D" id="1.10.8.10">
    <property type="entry name" value="DNA helicase RuvA subunit, C-terminal domain"/>
    <property type="match status" value="1"/>
</dbReference>
<dbReference type="Gene3D" id="1.10.238.10">
    <property type="entry name" value="EF-hand"/>
    <property type="match status" value="1"/>
</dbReference>
<dbReference type="InterPro" id="IPR014764">
    <property type="entry name" value="DCN-prot"/>
</dbReference>
<dbReference type="InterPro" id="IPR042460">
    <property type="entry name" value="DCN1-like_PONY"/>
</dbReference>
<dbReference type="InterPro" id="IPR005176">
    <property type="entry name" value="PONY_dom"/>
</dbReference>
<dbReference type="InterPro" id="IPR009060">
    <property type="entry name" value="UBA-like_sf"/>
</dbReference>
<dbReference type="PANTHER" id="PTHR12281:SF16">
    <property type="entry name" value="DCN1-LIKE PROTEIN 2"/>
    <property type="match status" value="1"/>
</dbReference>
<dbReference type="PANTHER" id="PTHR12281">
    <property type="entry name" value="RP42 RELATED"/>
    <property type="match status" value="1"/>
</dbReference>
<dbReference type="Pfam" id="PF03556">
    <property type="entry name" value="Cullin_binding"/>
    <property type="match status" value="1"/>
</dbReference>
<dbReference type="Pfam" id="PF14555">
    <property type="entry name" value="UBA_4"/>
    <property type="match status" value="1"/>
</dbReference>
<dbReference type="SUPFAM" id="SSF46934">
    <property type="entry name" value="UBA-like"/>
    <property type="match status" value="1"/>
</dbReference>
<dbReference type="PROSITE" id="PS51229">
    <property type="entry name" value="DCUN1"/>
    <property type="match status" value="1"/>
</dbReference>
<accession>Q8BZJ7</accession>
<accession>Q3U1U0</accession>
<accession>Q7TMX3</accession>
<protein>
    <recommendedName>
        <fullName evidence="7">DCN1-like protein 2</fullName>
        <shortName evidence="1">DCNL2</shortName>
    </recommendedName>
    <alternativeName>
        <fullName evidence="6">DCUN1 domain-containing protein 2</fullName>
    </alternativeName>
    <alternativeName>
        <fullName evidence="6">Defective in cullin neddylation protein 1-like protein 2</fullName>
    </alternativeName>
    <alternativeName>
        <fullName evidence="6">Squamous cell carcinoma-related oncogene 2</fullName>
    </alternativeName>
</protein>
<name>DCNL2_MOUSE</name>